<gene>
    <name evidence="1" type="primary">rplV</name>
    <name type="ordered locus">SEQ_0060</name>
</gene>
<keyword id="KW-0687">Ribonucleoprotein</keyword>
<keyword id="KW-0689">Ribosomal protein</keyword>
<keyword id="KW-0694">RNA-binding</keyword>
<keyword id="KW-0699">rRNA-binding</keyword>
<feature type="chain" id="PRO_1000166084" description="Large ribosomal subunit protein uL22">
    <location>
        <begin position="1"/>
        <end position="114"/>
    </location>
</feature>
<accession>C0M7R4</accession>
<proteinExistence type="inferred from homology"/>
<dbReference type="EMBL" id="FM204883">
    <property type="protein sequence ID" value="CAW91976.1"/>
    <property type="molecule type" value="Genomic_DNA"/>
</dbReference>
<dbReference type="RefSeq" id="WP_002986651.1">
    <property type="nucleotide sequence ID" value="NC_012471.1"/>
</dbReference>
<dbReference type="SMR" id="C0M7R4"/>
<dbReference type="GeneID" id="83703909"/>
<dbReference type="KEGG" id="seu:SEQ_0060"/>
<dbReference type="HOGENOM" id="CLU_083987_3_3_9"/>
<dbReference type="OrthoDB" id="9805969at2"/>
<dbReference type="Proteomes" id="UP000001365">
    <property type="component" value="Chromosome"/>
</dbReference>
<dbReference type="GO" id="GO:0022625">
    <property type="term" value="C:cytosolic large ribosomal subunit"/>
    <property type="evidence" value="ECO:0007669"/>
    <property type="project" value="TreeGrafter"/>
</dbReference>
<dbReference type="GO" id="GO:0019843">
    <property type="term" value="F:rRNA binding"/>
    <property type="evidence" value="ECO:0007669"/>
    <property type="project" value="UniProtKB-UniRule"/>
</dbReference>
<dbReference type="GO" id="GO:0003735">
    <property type="term" value="F:structural constituent of ribosome"/>
    <property type="evidence" value="ECO:0007669"/>
    <property type="project" value="InterPro"/>
</dbReference>
<dbReference type="GO" id="GO:0006412">
    <property type="term" value="P:translation"/>
    <property type="evidence" value="ECO:0007669"/>
    <property type="project" value="UniProtKB-UniRule"/>
</dbReference>
<dbReference type="CDD" id="cd00336">
    <property type="entry name" value="Ribosomal_L22"/>
    <property type="match status" value="1"/>
</dbReference>
<dbReference type="FunFam" id="3.90.470.10:FF:000001">
    <property type="entry name" value="50S ribosomal protein L22"/>
    <property type="match status" value="1"/>
</dbReference>
<dbReference type="Gene3D" id="3.90.470.10">
    <property type="entry name" value="Ribosomal protein L22/L17"/>
    <property type="match status" value="1"/>
</dbReference>
<dbReference type="HAMAP" id="MF_01331_B">
    <property type="entry name" value="Ribosomal_uL22_B"/>
    <property type="match status" value="1"/>
</dbReference>
<dbReference type="InterPro" id="IPR001063">
    <property type="entry name" value="Ribosomal_uL22"/>
</dbReference>
<dbReference type="InterPro" id="IPR005727">
    <property type="entry name" value="Ribosomal_uL22_bac/chlpt-type"/>
</dbReference>
<dbReference type="InterPro" id="IPR047867">
    <property type="entry name" value="Ribosomal_uL22_bac/org-type"/>
</dbReference>
<dbReference type="InterPro" id="IPR018260">
    <property type="entry name" value="Ribosomal_uL22_CS"/>
</dbReference>
<dbReference type="InterPro" id="IPR036394">
    <property type="entry name" value="Ribosomal_uL22_sf"/>
</dbReference>
<dbReference type="NCBIfam" id="TIGR01044">
    <property type="entry name" value="rplV_bact"/>
    <property type="match status" value="1"/>
</dbReference>
<dbReference type="PANTHER" id="PTHR13501">
    <property type="entry name" value="CHLOROPLAST 50S RIBOSOMAL PROTEIN L22-RELATED"/>
    <property type="match status" value="1"/>
</dbReference>
<dbReference type="PANTHER" id="PTHR13501:SF8">
    <property type="entry name" value="LARGE RIBOSOMAL SUBUNIT PROTEIN UL22M"/>
    <property type="match status" value="1"/>
</dbReference>
<dbReference type="Pfam" id="PF00237">
    <property type="entry name" value="Ribosomal_L22"/>
    <property type="match status" value="1"/>
</dbReference>
<dbReference type="SUPFAM" id="SSF54843">
    <property type="entry name" value="Ribosomal protein L22"/>
    <property type="match status" value="1"/>
</dbReference>
<dbReference type="PROSITE" id="PS00464">
    <property type="entry name" value="RIBOSOMAL_L22"/>
    <property type="match status" value="1"/>
</dbReference>
<reference key="1">
    <citation type="journal article" date="2009" name="PLoS Pathog.">
        <title>Genomic evidence for the evolution of Streptococcus equi: host restriction, increased virulence, and genetic exchange with human pathogens.</title>
        <authorList>
            <person name="Holden M.T.G."/>
            <person name="Heather Z."/>
            <person name="Paillot R."/>
            <person name="Steward K.F."/>
            <person name="Webb K."/>
            <person name="Ainslie F."/>
            <person name="Jourdan T."/>
            <person name="Bason N.C."/>
            <person name="Holroyd N.E."/>
            <person name="Mungall K."/>
            <person name="Quail M.A."/>
            <person name="Sanders M."/>
            <person name="Simmonds M."/>
            <person name="Willey D."/>
            <person name="Brooks K."/>
            <person name="Aanensen D.M."/>
            <person name="Spratt B.G."/>
            <person name="Jolley K.A."/>
            <person name="Maiden M.C.J."/>
            <person name="Kehoe M."/>
            <person name="Chanter N."/>
            <person name="Bentley S.D."/>
            <person name="Robinson C."/>
            <person name="Maskell D.J."/>
            <person name="Parkhill J."/>
            <person name="Waller A.S."/>
        </authorList>
    </citation>
    <scope>NUCLEOTIDE SEQUENCE [LARGE SCALE GENOMIC DNA]</scope>
    <source>
        <strain>4047</strain>
    </source>
</reference>
<name>RL22_STRE4</name>
<evidence type="ECO:0000255" key="1">
    <source>
        <dbReference type="HAMAP-Rule" id="MF_01331"/>
    </source>
</evidence>
<evidence type="ECO:0000305" key="2"/>
<sequence>MAEITSAKAMARTVRVSPRKTRLVLDLIRGKKVADAIAILKFTPNKAARVIEKTLNSAIANAENNFGLEKANLVVSETFANEGPTMKRFRPRAKGSASPINKRTTHVTVVVSEK</sequence>
<comment type="function">
    <text evidence="1">This protein binds specifically to 23S rRNA; its binding is stimulated by other ribosomal proteins, e.g. L4, L17, and L20. It is important during the early stages of 50S assembly. It makes multiple contacts with different domains of the 23S rRNA in the assembled 50S subunit and ribosome (By similarity).</text>
</comment>
<comment type="function">
    <text evidence="1">The globular domain of the protein is located near the polypeptide exit tunnel on the outside of the subunit, while an extended beta-hairpin is found that lines the wall of the exit tunnel in the center of the 70S ribosome.</text>
</comment>
<comment type="subunit">
    <text evidence="1">Part of the 50S ribosomal subunit.</text>
</comment>
<comment type="similarity">
    <text evidence="1">Belongs to the universal ribosomal protein uL22 family.</text>
</comment>
<organism>
    <name type="scientific">Streptococcus equi subsp. equi (strain 4047)</name>
    <dbReference type="NCBI Taxonomy" id="553482"/>
    <lineage>
        <taxon>Bacteria</taxon>
        <taxon>Bacillati</taxon>
        <taxon>Bacillota</taxon>
        <taxon>Bacilli</taxon>
        <taxon>Lactobacillales</taxon>
        <taxon>Streptococcaceae</taxon>
        <taxon>Streptococcus</taxon>
    </lineage>
</organism>
<protein>
    <recommendedName>
        <fullName evidence="1">Large ribosomal subunit protein uL22</fullName>
    </recommendedName>
    <alternativeName>
        <fullName evidence="2">50S ribosomal protein L22</fullName>
    </alternativeName>
</protein>